<accession>Q9STF2</accession>
<accession>Q9ASP7</accession>
<keyword id="KW-0025">Alternative splicing</keyword>
<keyword id="KW-0150">Chloroplast</keyword>
<keyword id="KW-0175">Coiled coil</keyword>
<keyword id="KW-0472">Membrane</keyword>
<keyword id="KW-0521">NADP</keyword>
<keyword id="KW-0597">Phosphoprotein</keyword>
<keyword id="KW-0934">Plastid</keyword>
<keyword id="KW-1185">Reference proteome</keyword>
<keyword id="KW-0793">Thylakoid</keyword>
<keyword id="KW-0809">Transit peptide</keyword>
<protein>
    <recommendedName>
        <fullName evidence="6">Protein PLASTID TRANSCRIPTIONALLY ACTIVE 16, chloroplastic</fullName>
        <shortName evidence="6">pTAC16</shortName>
    </recommendedName>
</protein>
<organism evidence="10">
    <name type="scientific">Arabidopsis thaliana</name>
    <name type="common">Mouse-ear cress</name>
    <dbReference type="NCBI Taxonomy" id="3702"/>
    <lineage>
        <taxon>Eukaryota</taxon>
        <taxon>Viridiplantae</taxon>
        <taxon>Streptophyta</taxon>
        <taxon>Embryophyta</taxon>
        <taxon>Tracheophyta</taxon>
        <taxon>Spermatophyta</taxon>
        <taxon>Magnoliopsida</taxon>
        <taxon>eudicotyledons</taxon>
        <taxon>Gunneridae</taxon>
        <taxon>Pentapetalae</taxon>
        <taxon>rosids</taxon>
        <taxon>malvids</taxon>
        <taxon>Brassicales</taxon>
        <taxon>Brassicaceae</taxon>
        <taxon>Camelineae</taxon>
        <taxon>Arabidopsis</taxon>
    </lineage>
</organism>
<reference key="1">
    <citation type="journal article" date="2000" name="Nature">
        <title>Sequence and analysis of chromosome 3 of the plant Arabidopsis thaliana.</title>
        <authorList>
            <person name="Salanoubat M."/>
            <person name="Lemcke K."/>
            <person name="Rieger M."/>
            <person name="Ansorge W."/>
            <person name="Unseld M."/>
            <person name="Fartmann B."/>
            <person name="Valle G."/>
            <person name="Bloecker H."/>
            <person name="Perez-Alonso M."/>
            <person name="Obermaier B."/>
            <person name="Delseny M."/>
            <person name="Boutry M."/>
            <person name="Grivell L.A."/>
            <person name="Mache R."/>
            <person name="Puigdomenech P."/>
            <person name="De Simone V."/>
            <person name="Choisne N."/>
            <person name="Artiguenave F."/>
            <person name="Robert C."/>
            <person name="Brottier P."/>
            <person name="Wincker P."/>
            <person name="Cattolico L."/>
            <person name="Weissenbach J."/>
            <person name="Saurin W."/>
            <person name="Quetier F."/>
            <person name="Schaefer M."/>
            <person name="Mueller-Auer S."/>
            <person name="Gabel C."/>
            <person name="Fuchs M."/>
            <person name="Benes V."/>
            <person name="Wurmbach E."/>
            <person name="Drzonek H."/>
            <person name="Erfle H."/>
            <person name="Jordan N."/>
            <person name="Bangert S."/>
            <person name="Wiedelmann R."/>
            <person name="Kranz H."/>
            <person name="Voss H."/>
            <person name="Holland R."/>
            <person name="Brandt P."/>
            <person name="Nyakatura G."/>
            <person name="Vezzi A."/>
            <person name="D'Angelo M."/>
            <person name="Pallavicini A."/>
            <person name="Toppo S."/>
            <person name="Simionati B."/>
            <person name="Conrad A."/>
            <person name="Hornischer K."/>
            <person name="Kauer G."/>
            <person name="Loehnert T.-H."/>
            <person name="Nordsiek G."/>
            <person name="Reichelt J."/>
            <person name="Scharfe M."/>
            <person name="Schoen O."/>
            <person name="Bargues M."/>
            <person name="Terol J."/>
            <person name="Climent J."/>
            <person name="Navarro P."/>
            <person name="Collado C."/>
            <person name="Perez-Perez A."/>
            <person name="Ottenwaelder B."/>
            <person name="Duchemin D."/>
            <person name="Cooke R."/>
            <person name="Laudie M."/>
            <person name="Berger-Llauro C."/>
            <person name="Purnelle B."/>
            <person name="Masuy D."/>
            <person name="de Haan M."/>
            <person name="Maarse A.C."/>
            <person name="Alcaraz J.-P."/>
            <person name="Cottet A."/>
            <person name="Casacuberta E."/>
            <person name="Monfort A."/>
            <person name="Argiriou A."/>
            <person name="Flores M."/>
            <person name="Liguori R."/>
            <person name="Vitale D."/>
            <person name="Mannhaupt G."/>
            <person name="Haase D."/>
            <person name="Schoof H."/>
            <person name="Rudd S."/>
            <person name="Zaccaria P."/>
            <person name="Mewes H.-W."/>
            <person name="Mayer K.F.X."/>
            <person name="Kaul S."/>
            <person name="Town C.D."/>
            <person name="Koo H.L."/>
            <person name="Tallon L.J."/>
            <person name="Jenkins J."/>
            <person name="Rooney T."/>
            <person name="Rizzo M."/>
            <person name="Walts A."/>
            <person name="Utterback T."/>
            <person name="Fujii C.Y."/>
            <person name="Shea T.P."/>
            <person name="Creasy T.H."/>
            <person name="Haas B."/>
            <person name="Maiti R."/>
            <person name="Wu D."/>
            <person name="Peterson J."/>
            <person name="Van Aken S."/>
            <person name="Pai G."/>
            <person name="Militscher J."/>
            <person name="Sellers P."/>
            <person name="Gill J.E."/>
            <person name="Feldblyum T.V."/>
            <person name="Preuss D."/>
            <person name="Lin X."/>
            <person name="Nierman W.C."/>
            <person name="Salzberg S.L."/>
            <person name="White O."/>
            <person name="Venter J.C."/>
            <person name="Fraser C.M."/>
            <person name="Kaneko T."/>
            <person name="Nakamura Y."/>
            <person name="Sato S."/>
            <person name="Kato T."/>
            <person name="Asamizu E."/>
            <person name="Sasamoto S."/>
            <person name="Kimura T."/>
            <person name="Idesawa K."/>
            <person name="Kawashima K."/>
            <person name="Kishida Y."/>
            <person name="Kiyokawa C."/>
            <person name="Kohara M."/>
            <person name="Matsumoto M."/>
            <person name="Matsuno A."/>
            <person name="Muraki A."/>
            <person name="Nakayama S."/>
            <person name="Nakazaki N."/>
            <person name="Shinpo S."/>
            <person name="Takeuchi C."/>
            <person name="Wada T."/>
            <person name="Watanabe A."/>
            <person name="Yamada M."/>
            <person name="Yasuda M."/>
            <person name="Tabata S."/>
        </authorList>
    </citation>
    <scope>NUCLEOTIDE SEQUENCE [LARGE SCALE GENOMIC DNA]</scope>
    <source>
        <strain>cv. Columbia</strain>
    </source>
</reference>
<reference key="2">
    <citation type="journal article" date="2017" name="Plant J.">
        <title>Araport11: a complete reannotation of the Arabidopsis thaliana reference genome.</title>
        <authorList>
            <person name="Cheng C.Y."/>
            <person name="Krishnakumar V."/>
            <person name="Chan A.P."/>
            <person name="Thibaud-Nissen F."/>
            <person name="Schobel S."/>
            <person name="Town C.D."/>
        </authorList>
    </citation>
    <scope>GENOME REANNOTATION</scope>
    <source>
        <strain>cv. Columbia</strain>
    </source>
</reference>
<reference key="3">
    <citation type="journal article" date="2003" name="Science">
        <title>Empirical analysis of transcriptional activity in the Arabidopsis genome.</title>
        <authorList>
            <person name="Yamada K."/>
            <person name="Lim J."/>
            <person name="Dale J.M."/>
            <person name="Chen H."/>
            <person name="Shinn P."/>
            <person name="Palm C.J."/>
            <person name="Southwick A.M."/>
            <person name="Wu H.C."/>
            <person name="Kim C.J."/>
            <person name="Nguyen M."/>
            <person name="Pham P.K."/>
            <person name="Cheuk R.F."/>
            <person name="Karlin-Newmann G."/>
            <person name="Liu S.X."/>
            <person name="Lam B."/>
            <person name="Sakano H."/>
            <person name="Wu T."/>
            <person name="Yu G."/>
            <person name="Miranda M."/>
            <person name="Quach H.L."/>
            <person name="Tripp M."/>
            <person name="Chang C.H."/>
            <person name="Lee J.M."/>
            <person name="Toriumi M.J."/>
            <person name="Chan M.M."/>
            <person name="Tang C.C."/>
            <person name="Onodera C.S."/>
            <person name="Deng J.M."/>
            <person name="Akiyama K."/>
            <person name="Ansari Y."/>
            <person name="Arakawa T."/>
            <person name="Banh J."/>
            <person name="Banno F."/>
            <person name="Bowser L."/>
            <person name="Brooks S.Y."/>
            <person name="Carninci P."/>
            <person name="Chao Q."/>
            <person name="Choy N."/>
            <person name="Enju A."/>
            <person name="Goldsmith A.D."/>
            <person name="Gurjal M."/>
            <person name="Hansen N.F."/>
            <person name="Hayashizaki Y."/>
            <person name="Johnson-Hopson C."/>
            <person name="Hsuan V.W."/>
            <person name="Iida K."/>
            <person name="Karnes M."/>
            <person name="Khan S."/>
            <person name="Koesema E."/>
            <person name="Ishida J."/>
            <person name="Jiang P.X."/>
            <person name="Jones T."/>
            <person name="Kawai J."/>
            <person name="Kamiya A."/>
            <person name="Meyers C."/>
            <person name="Nakajima M."/>
            <person name="Narusaka M."/>
            <person name="Seki M."/>
            <person name="Sakurai T."/>
            <person name="Satou M."/>
            <person name="Tamse R."/>
            <person name="Vaysberg M."/>
            <person name="Wallender E.K."/>
            <person name="Wong C."/>
            <person name="Yamamura Y."/>
            <person name="Yuan S."/>
            <person name="Shinozaki K."/>
            <person name="Davis R.W."/>
            <person name="Theologis A."/>
            <person name="Ecker J.R."/>
        </authorList>
    </citation>
    <scope>NUCLEOTIDE SEQUENCE [LARGE SCALE MRNA] (ISOFORM 2)</scope>
    <source>
        <strain>cv. Columbia</strain>
    </source>
</reference>
<reference key="4">
    <citation type="journal article" date="2006" name="Plant Cell">
        <title>pTAC2, -6, and -12 are components of the transcriptionally active plastid chromosome that are required for plastid gene expression.</title>
        <authorList>
            <person name="Pfalz J."/>
            <person name="Liere K."/>
            <person name="Kandlbinder A."/>
            <person name="Dietz K.-J."/>
            <person name="Oelmueller R."/>
        </authorList>
    </citation>
    <scope>SUBUNIT</scope>
    <scope>SUBCELLULAR LOCATION</scope>
    <scope>IDENTIFICATION BY MASS SPECTROMETRY</scope>
</reference>
<reference key="5">
    <citation type="journal article" date="2009" name="Plant Physiol.">
        <title>Large-scale Arabidopsis phosphoproteome profiling reveals novel chloroplast kinase substrates and phosphorylation networks.</title>
        <authorList>
            <person name="Reiland S."/>
            <person name="Messerli G."/>
            <person name="Baerenfaller K."/>
            <person name="Gerrits B."/>
            <person name="Endler A."/>
            <person name="Grossmann J."/>
            <person name="Gruissem W."/>
            <person name="Baginsky S."/>
        </authorList>
    </citation>
    <scope>PHOSPHORYLATION [LARGE SCALE ANALYSIS] AT SER-395 AND THR-451</scope>
    <scope>IDENTIFICATION BY MASS SPECTROMETRY [LARGE SCALE ANALYSIS]</scope>
</reference>
<reference key="6">
    <citation type="journal article" date="2012" name="FEBS Lett.">
        <title>Phosphoproteomics of Arabidopsis chloroplasts reveals involvement of the STN7 kinase in phosphorylation of nucleoid protein pTAC16.</title>
        <authorList>
            <person name="Ingelsson B."/>
            <person name="Vener A.V."/>
        </authorList>
    </citation>
    <scope>DISRUPTION PHENOTYPE</scope>
    <scope>SUBCELLULAR LOCATION</scope>
    <scope>PTM</scope>
    <scope>PHOSPHORYLATION AT THR-451</scope>
    <source>
        <strain>cv. Columbia</strain>
    </source>
</reference>
<reference key="7">
    <citation type="journal article" date="2012" name="Planta">
        <title>High light stimulates Deg1-dependent cleavage of the minor LHCII antenna proteins CP26 and CP29 and the PsbS protein in Arabidopsis thaliana.</title>
        <authorList>
            <person name="Zienkiewicz M."/>
            <person name="Ferenc A."/>
            <person name="Wasilewska W."/>
            <person name="Romanowska E."/>
        </authorList>
    </citation>
    <scope>INTERACTION WITH DEGP1</scope>
    <scope>SUBCELLULAR LOCATION</scope>
    <scope>IDENTIFICATION BY MASS SPECTROMETRY</scope>
    <source>
        <strain>cv. Columbia</strain>
    </source>
</reference>
<reference key="8">
    <citation type="journal article" date="2013" name="Cell Stress Chaperones">
        <title>Interactome analysis reveals versatile functions of Arabidopsis COLD SHOCK DOMAIN PROTEIN 3 in RNA processing within the nucleus and cytoplasm.</title>
        <authorList>
            <person name="Kim M.H."/>
            <person name="Sonoda Y."/>
            <person name="Sasaki K."/>
            <person name="Kaminaka H."/>
            <person name="Imai R."/>
        </authorList>
    </citation>
    <scope>INTERACTION WITH CSP3</scope>
</reference>
<dbReference type="EMBL" id="AL096859">
    <property type="protein sequence ID" value="CAB51187.1"/>
    <property type="molecule type" value="Genomic_DNA"/>
</dbReference>
<dbReference type="EMBL" id="CP002686">
    <property type="protein sequence ID" value="AEE78204.1"/>
    <property type="molecule type" value="Genomic_DNA"/>
</dbReference>
<dbReference type="EMBL" id="AF367356">
    <property type="protein sequence ID" value="AAK32942.1"/>
    <property type="molecule type" value="mRNA"/>
</dbReference>
<dbReference type="EMBL" id="AY143885">
    <property type="protein sequence ID" value="AAN28824.1"/>
    <property type="molecule type" value="mRNA"/>
</dbReference>
<dbReference type="PIR" id="T12970">
    <property type="entry name" value="T12970"/>
</dbReference>
<dbReference type="RefSeq" id="NP_566886.2">
    <molecule id="Q9STF2-1"/>
    <property type="nucleotide sequence ID" value="NM_114545.3"/>
</dbReference>
<dbReference type="FunCoup" id="Q9STF2">
    <property type="interactions" value="1495"/>
</dbReference>
<dbReference type="IntAct" id="Q9STF2">
    <property type="interactions" value="3"/>
</dbReference>
<dbReference type="MINT" id="Q9STF2"/>
<dbReference type="STRING" id="3702.Q9STF2"/>
<dbReference type="iPTMnet" id="Q9STF2"/>
<dbReference type="PaxDb" id="3702-AT3G46780.1"/>
<dbReference type="ProMEX" id="Q9STF2"/>
<dbReference type="ProteomicsDB" id="248678">
    <molecule id="Q9STF2-1"/>
</dbReference>
<dbReference type="EnsemblPlants" id="AT3G46780.1">
    <molecule id="Q9STF2-1"/>
    <property type="protein sequence ID" value="AT3G46780.1"/>
    <property type="gene ID" value="AT3G46780"/>
</dbReference>
<dbReference type="GeneID" id="823831"/>
<dbReference type="Gramene" id="AT3G46780.1">
    <molecule id="Q9STF2-1"/>
    <property type="protein sequence ID" value="AT3G46780.1"/>
    <property type="gene ID" value="AT3G46780"/>
</dbReference>
<dbReference type="KEGG" id="ath:AT3G46780"/>
<dbReference type="Araport" id="AT3G46780"/>
<dbReference type="TAIR" id="AT3G46780">
    <property type="gene designation" value="PTAC16"/>
</dbReference>
<dbReference type="eggNOG" id="KOG1203">
    <property type="taxonomic scope" value="Eukaryota"/>
</dbReference>
<dbReference type="HOGENOM" id="CLU_043457_0_0_1"/>
<dbReference type="InParanoid" id="Q9STF2"/>
<dbReference type="OMA" id="MASPYRL"/>
<dbReference type="OrthoDB" id="514963at2759"/>
<dbReference type="PhylomeDB" id="Q9STF2"/>
<dbReference type="CD-CODE" id="4299E36E">
    <property type="entry name" value="Nucleolus"/>
</dbReference>
<dbReference type="PRO" id="PR:Q9STF2"/>
<dbReference type="Proteomes" id="UP000006548">
    <property type="component" value="Chromosome 3"/>
</dbReference>
<dbReference type="ExpressionAtlas" id="Q9STF2">
    <property type="expression patterns" value="baseline and differential"/>
</dbReference>
<dbReference type="GO" id="GO:0009507">
    <property type="term" value="C:chloroplast"/>
    <property type="evidence" value="ECO:0007005"/>
    <property type="project" value="TAIR"/>
</dbReference>
<dbReference type="GO" id="GO:0009941">
    <property type="term" value="C:chloroplast envelope"/>
    <property type="evidence" value="ECO:0007005"/>
    <property type="project" value="TAIR"/>
</dbReference>
<dbReference type="GO" id="GO:0042644">
    <property type="term" value="C:chloroplast nucleoid"/>
    <property type="evidence" value="ECO:0000314"/>
    <property type="project" value="UniProtKB"/>
</dbReference>
<dbReference type="GO" id="GO:0009534">
    <property type="term" value="C:chloroplast thylakoid"/>
    <property type="evidence" value="ECO:0007005"/>
    <property type="project" value="TAIR"/>
</dbReference>
<dbReference type="GO" id="GO:0009535">
    <property type="term" value="C:chloroplast thylakoid membrane"/>
    <property type="evidence" value="ECO:0000314"/>
    <property type="project" value="UniProtKB"/>
</dbReference>
<dbReference type="GO" id="GO:0005829">
    <property type="term" value="C:cytosol"/>
    <property type="evidence" value="ECO:0007005"/>
    <property type="project" value="TAIR"/>
</dbReference>
<dbReference type="GO" id="GO:0098572">
    <property type="term" value="C:stromal side of plastid thylakoid membrane"/>
    <property type="evidence" value="ECO:0000314"/>
    <property type="project" value="UniProtKB"/>
</dbReference>
<dbReference type="GO" id="GO:0007623">
    <property type="term" value="P:circadian rhythm"/>
    <property type="evidence" value="ECO:0000270"/>
    <property type="project" value="TAIR"/>
</dbReference>
<dbReference type="Gene3D" id="3.40.50.720">
    <property type="entry name" value="NAD(P)-binding Rossmann-like Domain"/>
    <property type="match status" value="1"/>
</dbReference>
<dbReference type="InterPro" id="IPR016040">
    <property type="entry name" value="NAD(P)-bd_dom"/>
</dbReference>
<dbReference type="InterPro" id="IPR036291">
    <property type="entry name" value="NAD(P)-bd_dom_sf"/>
</dbReference>
<dbReference type="PANTHER" id="PTHR47711">
    <property type="entry name" value="PROTEIN PLASTID TRANSCRIPTIONALLY ACTIVE 16, CHLOROPLASTIC"/>
    <property type="match status" value="1"/>
</dbReference>
<dbReference type="PANTHER" id="PTHR47711:SF2">
    <property type="entry name" value="PROTEIN PLASTID TRANSCRIPTIONALLY ACTIVE 16, CHLOROPLASTIC"/>
    <property type="match status" value="1"/>
</dbReference>
<dbReference type="Pfam" id="PF13460">
    <property type="entry name" value="NAD_binding_10"/>
    <property type="match status" value="1"/>
</dbReference>
<dbReference type="SUPFAM" id="SSF51735">
    <property type="entry name" value="NAD(P)-binding Rossmann-fold domains"/>
    <property type="match status" value="1"/>
</dbReference>
<name>PTA16_ARATH</name>
<sequence>MASSSTSFPLTTAPPQGVRFNRRKPRLTVWAKQTAFQLGKTKGDDDSEGKQKGKNPFQFDFGKLPDMKSLIPVVTNPSTGLVFGNNRKKDPGTIFVAGATGQAGIRIAQTLLQRGFSVRAGVPDLGAAQDLARVAATYKILSNDEVKRLNAVQSPFQDAESIAKAIGNATKVVVTVGATENGPDAQVSTSDALLVVQAAELAGVSHVAIVYDGTISGSTYNVLDGITSFFGNLFAKSQPLTISDLIEKVAQTDVAYTLIKTSLTEDFSPEKAYNVVVSAEGSNSGSGSSSSEAYKVPKLKIASLVADIFANTAVAENKVVEVSTDPSAPSRPVDELFSVIPEDGRRKVYADAIARERAEEEAKVAADKAREAAEAAKEFEKQMQKLSEKEAEAASLAEDAQQKADAVGVTVDGLFNKAKDISSGLSWNKLGSQFATAIQNASETPKVQVATVRGQAKARNLPPKKAVVKQRPSSPFASKPKEERPKKPEKEVRKVFGGLFKQETIYIDDD</sequence>
<proteinExistence type="evidence at protein level"/>
<gene>
    <name evidence="6" type="primary">PTAC16</name>
    <name evidence="8" type="ordered locus">At3g46780</name>
    <name evidence="9" type="ORF">T6H20.190</name>
</gene>
<evidence type="ECO:0000255" key="1"/>
<evidence type="ECO:0000256" key="2">
    <source>
        <dbReference type="SAM" id="MobiDB-lite"/>
    </source>
</evidence>
<evidence type="ECO:0000269" key="3">
    <source>
    </source>
</evidence>
<evidence type="ECO:0000269" key="4">
    <source>
    </source>
</evidence>
<evidence type="ECO:0000269" key="5">
    <source>
    </source>
</evidence>
<evidence type="ECO:0000303" key="6">
    <source>
    </source>
</evidence>
<evidence type="ECO:0000305" key="7"/>
<evidence type="ECO:0000312" key="8">
    <source>
        <dbReference type="EMBL" id="AEE78204.1"/>
    </source>
</evidence>
<evidence type="ECO:0000312" key="9">
    <source>
        <dbReference type="EMBL" id="CAB51187.1"/>
    </source>
</evidence>
<evidence type="ECO:0000312" key="10">
    <source>
        <dbReference type="Proteomes" id="UP000006548"/>
    </source>
</evidence>
<evidence type="ECO:0007744" key="11">
    <source>
    </source>
</evidence>
<feature type="transit peptide" description="Chloroplast" evidence="1">
    <location>
        <begin position="1"/>
        <end position="19"/>
    </location>
</feature>
<feature type="chain" id="PRO_0000434135" description="Protein PLASTID TRANSCRIPTIONALLY ACTIVE 16, chloroplastic">
    <location>
        <begin position="20"/>
        <end position="510"/>
    </location>
</feature>
<feature type="region of interest" description="Disordered" evidence="2">
    <location>
        <begin position="1"/>
        <end position="24"/>
    </location>
</feature>
<feature type="region of interest" description="Disordered" evidence="2">
    <location>
        <begin position="38"/>
        <end position="58"/>
    </location>
</feature>
<feature type="region of interest" description="Disordered" evidence="2">
    <location>
        <begin position="453"/>
        <end position="493"/>
    </location>
</feature>
<feature type="coiled-coil region" evidence="1">
    <location>
        <begin position="354"/>
        <end position="403"/>
    </location>
</feature>
<feature type="compositionally biased region" description="Polar residues" evidence="2">
    <location>
        <begin position="1"/>
        <end position="14"/>
    </location>
</feature>
<feature type="compositionally biased region" description="Basic and acidic residues" evidence="2">
    <location>
        <begin position="41"/>
        <end position="51"/>
    </location>
</feature>
<feature type="compositionally biased region" description="Basic and acidic residues" evidence="2">
    <location>
        <begin position="479"/>
        <end position="493"/>
    </location>
</feature>
<feature type="binding site" evidence="1">
    <location>
        <begin position="94"/>
        <end position="123"/>
    </location>
    <ligand>
        <name>NADP(+)</name>
        <dbReference type="ChEBI" id="CHEBI:58349"/>
    </ligand>
</feature>
<feature type="modified residue" description="Phosphoserine" evidence="11">
    <location>
        <position position="395"/>
    </location>
</feature>
<feature type="modified residue" description="Phosphothreonine; by STN7" evidence="5 11">
    <location>
        <position position="451"/>
    </location>
</feature>
<feature type="splice variant" id="VSP_057905" description="In isoform 2." evidence="7">
    <original>P</original>
    <variation>M</variation>
    <location>
        <position position="297"/>
    </location>
</feature>
<feature type="splice variant" id="VSP_057906" description="In isoform 2." evidence="7">
    <location>
        <begin position="298"/>
        <end position="510"/>
    </location>
</feature>
<comment type="function">
    <text evidence="7">Probably involved in the regulation of plastid gene expression.</text>
</comment>
<comment type="subunit">
    <text evidence="3 4">Component of the plastid transcriptionally active chromosome required for plastid gene expression (PubMed:16326926). Interacts with DEGP1 under high light conditions and maybe its degradation target (PubMed:21877139).</text>
</comment>
<comment type="subcellular location">
    <subcellularLocation>
        <location evidence="3 5">Plastid</location>
        <location evidence="3 5">Chloroplast stroma</location>
        <location evidence="3 5">Chloroplast nucleoid</location>
    </subcellularLocation>
    <subcellularLocation>
        <location evidence="4 5">Plastid</location>
        <location evidence="4 5">Chloroplast thylakoid membrane</location>
        <topology evidence="5">Peripheral membrane protein</topology>
        <orientation evidence="5">Stromal side</orientation>
    </subcellularLocation>
</comment>
<comment type="alternative products">
    <event type="alternative splicing"/>
    <isoform>
        <id>Q9STF2-1</id>
        <name>1</name>
        <sequence type="displayed"/>
    </isoform>
    <isoform>
        <id>Q9STF2-2</id>
        <name>2</name>
        <sequence type="described" ref="VSP_057905 VSP_057906"/>
    </isoform>
</comment>
<comment type="PTM">
    <text>Excluded from chloroplast nucleoid when phosphorylated on Thr-451 by STN7 that may regulate membrane-anchoring functions of the nucleoid.</text>
</comment>
<comment type="disruption phenotype">
    <text evidence="5">No visible phenotype and normal nucleoids.</text>
</comment>
<comment type="similarity">
    <text evidence="7">Belongs to the NAD(P)-dependent epimerase/dehydratase family.</text>
</comment>